<protein>
    <recommendedName>
        <fullName evidence="1">Transaldolase</fullName>
        <ecNumber evidence="1">2.2.1.2</ecNumber>
    </recommendedName>
</protein>
<comment type="function">
    <text evidence="1">Transaldolase is important for the balance of metabolites in the pentose-phosphate pathway.</text>
</comment>
<comment type="catalytic activity">
    <reaction evidence="1">
        <text>D-sedoheptulose 7-phosphate + D-glyceraldehyde 3-phosphate = D-erythrose 4-phosphate + beta-D-fructose 6-phosphate</text>
        <dbReference type="Rhea" id="RHEA:17053"/>
        <dbReference type="ChEBI" id="CHEBI:16897"/>
        <dbReference type="ChEBI" id="CHEBI:57483"/>
        <dbReference type="ChEBI" id="CHEBI:57634"/>
        <dbReference type="ChEBI" id="CHEBI:59776"/>
        <dbReference type="EC" id="2.2.1.2"/>
    </reaction>
</comment>
<comment type="pathway">
    <text evidence="1">Carbohydrate degradation; pentose phosphate pathway; D-glyceraldehyde 3-phosphate and beta-D-fructose 6-phosphate from D-ribose 5-phosphate and D-xylulose 5-phosphate (non-oxidative stage): step 2/3.</text>
</comment>
<comment type="subcellular location">
    <subcellularLocation>
        <location evidence="1">Cytoplasm</location>
    </subcellularLocation>
</comment>
<comment type="similarity">
    <text evidence="1">Belongs to the transaldolase family. Type 2 subfamily.</text>
</comment>
<accession>Q741B5</accession>
<keyword id="KW-0963">Cytoplasm</keyword>
<keyword id="KW-0570">Pentose shunt</keyword>
<keyword id="KW-1185">Reference proteome</keyword>
<keyword id="KW-0704">Schiff base</keyword>
<keyword id="KW-0808">Transferase</keyword>
<reference key="1">
    <citation type="journal article" date="2005" name="Proc. Natl. Acad. Sci. U.S.A.">
        <title>The complete genome sequence of Mycobacterium avium subspecies paratuberculosis.</title>
        <authorList>
            <person name="Li L."/>
            <person name="Bannantine J.P."/>
            <person name="Zhang Q."/>
            <person name="Amonsin A."/>
            <person name="May B.J."/>
            <person name="Alt D."/>
            <person name="Banerji N."/>
            <person name="Kanjilal S."/>
            <person name="Kapur V."/>
        </authorList>
    </citation>
    <scope>NUCLEOTIDE SEQUENCE [LARGE SCALE GENOMIC DNA]</scope>
    <source>
        <strain>ATCC BAA-968 / K-10</strain>
    </source>
</reference>
<evidence type="ECO:0000255" key="1">
    <source>
        <dbReference type="HAMAP-Rule" id="MF_00493"/>
    </source>
</evidence>
<gene>
    <name evidence="1" type="primary">tal</name>
    <name type="ordered locus">MAP_1177c</name>
</gene>
<organism>
    <name type="scientific">Mycolicibacterium paratuberculosis (strain ATCC BAA-968 / K-10)</name>
    <name type="common">Mycobacterium paratuberculosis</name>
    <dbReference type="NCBI Taxonomy" id="262316"/>
    <lineage>
        <taxon>Bacteria</taxon>
        <taxon>Bacillati</taxon>
        <taxon>Actinomycetota</taxon>
        <taxon>Actinomycetes</taxon>
        <taxon>Mycobacteriales</taxon>
        <taxon>Mycobacteriaceae</taxon>
        <taxon>Mycobacterium</taxon>
        <taxon>Mycobacterium avium complex (MAC)</taxon>
    </lineage>
</organism>
<sequence>MTAQNPNLAALSAAGVSVWLDDLSRDRLRSGNLQELIDTKCVVGVTTNPSIFQKAFAEGHAYDSQIAELAARGADVDATIRTVTTDDVRNACDVLTREWENSDGVDGRVSIEVDPRLAGDTDKTIAQAVELWKIVDRPNLFIKIPATQAGLPAITAVLAEGISVNVTLIFSVERYRAVMDAYLAGMEKAREAGHDLSKIHSVASFFVSRVDTEIDKRLEKIGGERALALRGQAGVANARLAYAAYQEVFEGGQRYQALKADGARVQRPLWASTGVKNPDYSDTLYVTELVAPNTVNTMPEKTIDAVADHGVIRGDTVTGTGPDAQRVFDELAAVGVDLPDVFVVLENEGVEKFVDSWTELMEETQKQLGSASK</sequence>
<feature type="chain" id="PRO_1000126269" description="Transaldolase">
    <location>
        <begin position="1"/>
        <end position="373"/>
    </location>
</feature>
<feature type="active site" description="Schiff-base intermediate with substrate" evidence="1">
    <location>
        <position position="143"/>
    </location>
</feature>
<name>TAL_MYCPA</name>
<proteinExistence type="inferred from homology"/>
<dbReference type="EC" id="2.2.1.2" evidence="1"/>
<dbReference type="EMBL" id="AE016958">
    <property type="protein sequence ID" value="AAS03494.1"/>
    <property type="molecule type" value="Genomic_DNA"/>
</dbReference>
<dbReference type="RefSeq" id="WP_003876069.1">
    <property type="nucleotide sequence ID" value="NZ_CP106873.1"/>
</dbReference>
<dbReference type="SMR" id="Q741B5"/>
<dbReference type="STRING" id="262316.MAP_1177c"/>
<dbReference type="KEGG" id="mpa:MAP_1177c"/>
<dbReference type="eggNOG" id="COG0176">
    <property type="taxonomic scope" value="Bacteria"/>
</dbReference>
<dbReference type="HOGENOM" id="CLU_050771_1_0_11"/>
<dbReference type="UniPathway" id="UPA00115">
    <property type="reaction ID" value="UER00414"/>
</dbReference>
<dbReference type="Proteomes" id="UP000000580">
    <property type="component" value="Chromosome"/>
</dbReference>
<dbReference type="GO" id="GO:0005737">
    <property type="term" value="C:cytoplasm"/>
    <property type="evidence" value="ECO:0007669"/>
    <property type="project" value="UniProtKB-SubCell"/>
</dbReference>
<dbReference type="GO" id="GO:0004801">
    <property type="term" value="F:transaldolase activity"/>
    <property type="evidence" value="ECO:0007669"/>
    <property type="project" value="UniProtKB-UniRule"/>
</dbReference>
<dbReference type="GO" id="GO:0005975">
    <property type="term" value="P:carbohydrate metabolic process"/>
    <property type="evidence" value="ECO:0007669"/>
    <property type="project" value="InterPro"/>
</dbReference>
<dbReference type="GO" id="GO:0006098">
    <property type="term" value="P:pentose-phosphate shunt"/>
    <property type="evidence" value="ECO:0007669"/>
    <property type="project" value="UniProtKB-UniRule"/>
</dbReference>
<dbReference type="CDD" id="cd00955">
    <property type="entry name" value="Transaldolase_like"/>
    <property type="match status" value="1"/>
</dbReference>
<dbReference type="Gene3D" id="3.20.20.70">
    <property type="entry name" value="Aldolase class I"/>
    <property type="match status" value="1"/>
</dbReference>
<dbReference type="HAMAP" id="MF_00493">
    <property type="entry name" value="Transaldolase_2"/>
    <property type="match status" value="1"/>
</dbReference>
<dbReference type="InterPro" id="IPR013785">
    <property type="entry name" value="Aldolase_TIM"/>
</dbReference>
<dbReference type="InterPro" id="IPR001585">
    <property type="entry name" value="TAL/FSA"/>
</dbReference>
<dbReference type="InterPro" id="IPR004732">
    <property type="entry name" value="Transaldolase_2"/>
</dbReference>
<dbReference type="InterPro" id="IPR018225">
    <property type="entry name" value="Transaldolase_AS"/>
</dbReference>
<dbReference type="NCBIfam" id="NF002881">
    <property type="entry name" value="PRK03343.1"/>
    <property type="match status" value="1"/>
</dbReference>
<dbReference type="NCBIfam" id="TIGR00876">
    <property type="entry name" value="tal_mycobact"/>
    <property type="match status" value="1"/>
</dbReference>
<dbReference type="PANTHER" id="PTHR10683">
    <property type="entry name" value="TRANSALDOLASE"/>
    <property type="match status" value="1"/>
</dbReference>
<dbReference type="PANTHER" id="PTHR10683:SF31">
    <property type="entry name" value="TRANSALDOLASE"/>
    <property type="match status" value="1"/>
</dbReference>
<dbReference type="Pfam" id="PF00923">
    <property type="entry name" value="TAL_FSA"/>
    <property type="match status" value="1"/>
</dbReference>
<dbReference type="PIRSF" id="PIRSF036915">
    <property type="entry name" value="Trnald_Bac_Plnt"/>
    <property type="match status" value="1"/>
</dbReference>
<dbReference type="SUPFAM" id="SSF51569">
    <property type="entry name" value="Aldolase"/>
    <property type="match status" value="1"/>
</dbReference>
<dbReference type="PROSITE" id="PS01054">
    <property type="entry name" value="TRANSALDOLASE_1"/>
    <property type="match status" value="1"/>
</dbReference>
<dbReference type="PROSITE" id="PS00958">
    <property type="entry name" value="TRANSALDOLASE_2"/>
    <property type="match status" value="1"/>
</dbReference>